<proteinExistence type="evidence at protein level"/>
<gene>
    <name evidence="1" type="primary">glkA</name>
    <name type="ordered locus">PH0589</name>
</gene>
<organism>
    <name type="scientific">Pyrococcus horikoshii (strain ATCC 700860 / DSM 12428 / JCM 9974 / NBRC 100139 / OT-3)</name>
    <dbReference type="NCBI Taxonomy" id="70601"/>
    <lineage>
        <taxon>Archaea</taxon>
        <taxon>Methanobacteriati</taxon>
        <taxon>Methanobacteriota</taxon>
        <taxon>Thermococci</taxon>
        <taxon>Thermococcales</taxon>
        <taxon>Thermococcaceae</taxon>
        <taxon>Pyrococcus</taxon>
    </lineage>
</organism>
<comment type="function">
    <text evidence="1 2">Catalyzes the ADP-dependent phosphorylation of D-glucose to D-glucose 6-phosphate and glucosamine to glucosamine 6-phosphate.</text>
</comment>
<comment type="catalytic activity">
    <reaction evidence="1 2">
        <text>D-glucose + ADP = D-glucose 6-phosphate + AMP + H(+)</text>
        <dbReference type="Rhea" id="RHEA:11460"/>
        <dbReference type="ChEBI" id="CHEBI:4167"/>
        <dbReference type="ChEBI" id="CHEBI:15378"/>
        <dbReference type="ChEBI" id="CHEBI:61548"/>
        <dbReference type="ChEBI" id="CHEBI:456215"/>
        <dbReference type="ChEBI" id="CHEBI:456216"/>
        <dbReference type="EC" id="2.7.1.147"/>
    </reaction>
</comment>
<comment type="catalytic activity">
    <reaction evidence="1">
        <text>D-glucosamine + ADP = D-glucosamine 6-phosphate + AMP + H(+)</text>
        <dbReference type="Rhea" id="RHEA:62084"/>
        <dbReference type="ChEBI" id="CHEBI:15378"/>
        <dbReference type="ChEBI" id="CHEBI:58723"/>
        <dbReference type="ChEBI" id="CHEBI:58725"/>
        <dbReference type="ChEBI" id="CHEBI:456215"/>
        <dbReference type="ChEBI" id="CHEBI:456216"/>
    </reaction>
</comment>
<comment type="cofactor">
    <cofactor evidence="1">
        <name>Mg(2+)</name>
        <dbReference type="ChEBI" id="CHEBI:18420"/>
    </cofactor>
    <text evidence="1">Binds 1 Mg(2+) ion per subunit.</text>
</comment>
<comment type="activity regulation">
    <text evidence="2">Inhibited by 8-bromoadenosine phosphate (8-Br-AMP).</text>
</comment>
<comment type="biophysicochemical properties">
    <kinetics>
        <KM evidence="2">0.64 mM for glucose</KM>
        <KM evidence="2">0.13 mM for ADP</KM>
    </kinetics>
</comment>
<comment type="pathway">
    <text evidence="1">Carbohydrate degradation; glycolysis.</text>
</comment>
<comment type="subcellular location">
    <subcellularLocation>
        <location evidence="1">Cytoplasm</location>
    </subcellularLocation>
</comment>
<comment type="similarity">
    <text evidence="1">Belongs to the ADP-dependent glucokinase family.</text>
</comment>
<sequence length="457" mass="52090">MITMTNWESLYEKALDKVEASIRKVRGVLLAYNTNIDAIKYLKREDLEKRIEKVGKEEVLRYSEELPKEIETIPQLLGSILWSIKRGKAAELLVVSREVREYMRKWGWDELRMGGQVGIMANLLGGVYGIPVIAHVPQLSELQASLFLDGPIYVPTFERGELRLIHPREFRKGEEDCIHYIYEFPRNFKVLDFEAPRENRFIGAADDYNPILYVREEWIERFEEIAKRSELAIISGLHPLTQENHGKPIKLVREHLKILNDLGIRAHLEFAFTPDEVVRLEIVKLLKHFYSVGLNEVELASVVSVMGEKELAERIISKDPADPIAVIEGLLKLIKETGVKRIHFHTYGYYLALTREKGEHVRDALLFSALAAATKAMKGNIEKLSDIREGLAVPIGEQGLEVEKILEKEFSLRDGIGSIEDYQLTFIPTKVVKKPKSTVGIGDTISSSAFVSEFSLH</sequence>
<protein>
    <recommendedName>
        <fullName evidence="1 4">ADP-dependent glucose/glucosamine kinase</fullName>
        <ecNumber evidence="1">2.7.1.-</ecNumber>
        <ecNumber evidence="1 2">2.7.1.147</ecNumber>
    </recommendedName>
    <alternativeName>
        <fullName evidence="1 3">ADP-dependent glucokinase</fullName>
        <shortName evidence="1">ADP-GK</shortName>
        <shortName evidence="1 3">ADPGK</shortName>
    </alternativeName>
    <alternativeName>
        <fullName evidence="1">Glucosamine kinase</fullName>
        <shortName evidence="1">GlcN kinase</shortName>
    </alternativeName>
</protein>
<dbReference type="EC" id="2.7.1.-" evidence="1"/>
<dbReference type="EC" id="2.7.1.147" evidence="1 2"/>
<dbReference type="EMBL" id="BA000001">
    <property type="protein sequence ID" value="BAA29678.1"/>
    <property type="molecule type" value="Genomic_DNA"/>
</dbReference>
<dbReference type="PIR" id="A71174">
    <property type="entry name" value="A71174"/>
</dbReference>
<dbReference type="PDB" id="1L2L">
    <property type="method" value="X-ray"/>
    <property type="resolution" value="2.00 A"/>
    <property type="chains" value="A=1-457"/>
</dbReference>
<dbReference type="PDB" id="5O0I">
    <property type="method" value="X-ray"/>
    <property type="resolution" value="2.00 A"/>
    <property type="chains" value="A=4-457"/>
</dbReference>
<dbReference type="PDB" id="5O0J">
    <property type="method" value="X-ray"/>
    <property type="resolution" value="1.81 A"/>
    <property type="chains" value="A=5-457"/>
</dbReference>
<dbReference type="PDBsum" id="1L2L"/>
<dbReference type="PDBsum" id="5O0I"/>
<dbReference type="PDBsum" id="5O0J"/>
<dbReference type="SMR" id="O58328"/>
<dbReference type="STRING" id="70601.gene:9377529"/>
<dbReference type="EnsemblBacteria" id="BAA29678">
    <property type="protein sequence ID" value="BAA29678"/>
    <property type="gene ID" value="BAA29678"/>
</dbReference>
<dbReference type="KEGG" id="pho:PH0589"/>
<dbReference type="eggNOG" id="arCOG03370">
    <property type="taxonomic scope" value="Archaea"/>
</dbReference>
<dbReference type="BRENDA" id="2.7.1.147">
    <property type="organism ID" value="5244"/>
</dbReference>
<dbReference type="SABIO-RK" id="O58328"/>
<dbReference type="UniPathway" id="UPA00109"/>
<dbReference type="EvolutionaryTrace" id="O58328"/>
<dbReference type="Proteomes" id="UP000000752">
    <property type="component" value="Chromosome"/>
</dbReference>
<dbReference type="GO" id="GO:0005737">
    <property type="term" value="C:cytoplasm"/>
    <property type="evidence" value="ECO:0007669"/>
    <property type="project" value="UniProtKB-SubCell"/>
</dbReference>
<dbReference type="GO" id="GO:0043843">
    <property type="term" value="F:ADP-specific glucokinase activity"/>
    <property type="evidence" value="ECO:0007669"/>
    <property type="project" value="UniProtKB-EC"/>
</dbReference>
<dbReference type="GO" id="GO:0004340">
    <property type="term" value="F:glucokinase activity"/>
    <property type="evidence" value="ECO:0007669"/>
    <property type="project" value="UniProtKB-UniRule"/>
</dbReference>
<dbReference type="GO" id="GO:0000287">
    <property type="term" value="F:magnesium ion binding"/>
    <property type="evidence" value="ECO:0007669"/>
    <property type="project" value="InterPro"/>
</dbReference>
<dbReference type="GO" id="GO:0006006">
    <property type="term" value="P:glucose metabolic process"/>
    <property type="evidence" value="ECO:0007669"/>
    <property type="project" value="UniProtKB-KW"/>
</dbReference>
<dbReference type="GO" id="GO:0006096">
    <property type="term" value="P:glycolytic process"/>
    <property type="evidence" value="ECO:0007669"/>
    <property type="project" value="UniProtKB-UniRule"/>
</dbReference>
<dbReference type="CDD" id="cd01938">
    <property type="entry name" value="ADPGK_ADPPFK"/>
    <property type="match status" value="1"/>
</dbReference>
<dbReference type="Gene3D" id="3.30.1110.20">
    <property type="match status" value="1"/>
</dbReference>
<dbReference type="Gene3D" id="3.40.1190.20">
    <property type="match status" value="1"/>
</dbReference>
<dbReference type="HAMAP" id="MF_00809">
    <property type="entry name" value="ADP_glucokinase"/>
    <property type="match status" value="1"/>
</dbReference>
<dbReference type="InterPro" id="IPR007666">
    <property type="entry name" value="ADP_PFK/GK"/>
</dbReference>
<dbReference type="InterPro" id="IPR015990">
    <property type="entry name" value="ADP_PFK/GK_arc"/>
</dbReference>
<dbReference type="InterPro" id="IPR031299">
    <property type="entry name" value="GlkA"/>
</dbReference>
<dbReference type="InterPro" id="IPR029056">
    <property type="entry name" value="Ribokinase-like"/>
</dbReference>
<dbReference type="NCBIfam" id="NF010641">
    <property type="entry name" value="PRK14038.1"/>
    <property type="match status" value="1"/>
</dbReference>
<dbReference type="PANTHER" id="PTHR21208">
    <property type="entry name" value="ADP-DEPENDENT GLUCOKINASE"/>
    <property type="match status" value="1"/>
</dbReference>
<dbReference type="PANTHER" id="PTHR21208:SF1">
    <property type="entry name" value="ADP-DEPENDENT GLUCOKINASE"/>
    <property type="match status" value="1"/>
</dbReference>
<dbReference type="Pfam" id="PF04587">
    <property type="entry name" value="ADP_PFK_GK"/>
    <property type="match status" value="1"/>
</dbReference>
<dbReference type="PIRSF" id="PIRSF015883">
    <property type="entry name" value="ADP-Pfk_glckin"/>
    <property type="match status" value="1"/>
</dbReference>
<dbReference type="SUPFAM" id="SSF53613">
    <property type="entry name" value="Ribokinase-like"/>
    <property type="match status" value="1"/>
</dbReference>
<dbReference type="PROSITE" id="PS51255">
    <property type="entry name" value="ADPK"/>
    <property type="match status" value="1"/>
</dbReference>
<keyword id="KW-0002">3D-structure</keyword>
<keyword id="KW-0119">Carbohydrate metabolism</keyword>
<keyword id="KW-0963">Cytoplasm</keyword>
<keyword id="KW-0313">Glucose metabolism</keyword>
<keyword id="KW-0324">Glycolysis</keyword>
<keyword id="KW-0418">Kinase</keyword>
<keyword id="KW-0460">Magnesium</keyword>
<keyword id="KW-0479">Metal-binding</keyword>
<keyword id="KW-0808">Transferase</keyword>
<reference key="1">
    <citation type="journal article" date="1998" name="DNA Res.">
        <title>Complete sequence and gene organization of the genome of a hyper-thermophilic archaebacterium, Pyrococcus horikoshii OT3.</title>
        <authorList>
            <person name="Kawarabayasi Y."/>
            <person name="Sawada M."/>
            <person name="Horikawa H."/>
            <person name="Haikawa Y."/>
            <person name="Hino Y."/>
            <person name="Yamamoto S."/>
            <person name="Sekine M."/>
            <person name="Baba S."/>
            <person name="Kosugi H."/>
            <person name="Hosoyama A."/>
            <person name="Nagai Y."/>
            <person name="Sakai M."/>
            <person name="Ogura K."/>
            <person name="Otsuka R."/>
            <person name="Nakazawa H."/>
            <person name="Takamiya M."/>
            <person name="Ohfuku Y."/>
            <person name="Funahashi T."/>
            <person name="Tanaka T."/>
            <person name="Kudoh Y."/>
            <person name="Yamazaki J."/>
            <person name="Kushida N."/>
            <person name="Oguchi A."/>
            <person name="Aoki K."/>
            <person name="Yoshizawa T."/>
            <person name="Nakamura Y."/>
            <person name="Robb F.T."/>
            <person name="Horikoshi K."/>
            <person name="Masuchi Y."/>
            <person name="Shizuya H."/>
            <person name="Kikuchi H."/>
        </authorList>
    </citation>
    <scope>NUCLEOTIDE SEQUENCE [LARGE SCALE GENOMIC DNA]</scope>
    <source>
        <strain>ATCC 700860 / DSM 12428 / JCM 9974 / NBRC 100139 / OT-3</strain>
    </source>
</reference>
<reference evidence="5" key="2">
    <citation type="journal article" date="2002" name="Protein Sci.">
        <title>Crystal structure of the ADP-dependent glucokinase from Pyrococcus horikoshii at 2.0-A resolution: a large conformational change in ADP-dependent glucokinase.</title>
        <authorList>
            <person name="Tsuge H."/>
            <person name="Sakuraba H."/>
            <person name="Kobe T."/>
            <person name="Kujime A."/>
            <person name="Katunuma N."/>
            <person name="Ohshima T."/>
        </authorList>
    </citation>
    <scope>X-RAY CRYSTALLOGRAPHY (2.0 ANGSTROMS)</scope>
    <source>
        <strain>ATCC 700860 / DSM 12428 / JCM 9974 / NBRC 100139 / OT-3</strain>
    </source>
</reference>
<reference evidence="6 7" key="3">
    <citation type="journal article" date="2018" name="J. Biol. Chem.">
        <title>Structural basis for ADP-dependent glucokinase inhibition by 8-bromo-substituted adenosine nucleotide.</title>
        <authorList>
            <person name="Grudnik P."/>
            <person name="Kaminski M.M."/>
            <person name="Rembacz K.P."/>
            <person name="Kuska K."/>
            <person name="Madej M."/>
            <person name="Potempa J."/>
            <person name="Dawidowski M."/>
            <person name="Dubin G."/>
        </authorList>
    </citation>
    <scope>X-RAY CRYSTALLOGRAPHY (1.81 ANGSTROMS) OF 5-457 OF APOENZYME AND IN COMPLEX WITH GLUCOSE</scope>
    <scope>FUNCTION</scope>
    <scope>CATALYTIC ACTIVITY</scope>
    <scope>ACTIVITY REGULATION</scope>
    <scope>BIOPHYSICOCHEMICAL PROPERTIES</scope>
    <scope>MUTAGENESIS OF PHE-272</scope>
</reference>
<evidence type="ECO:0000255" key="1">
    <source>
        <dbReference type="HAMAP-Rule" id="MF_00809"/>
    </source>
</evidence>
<evidence type="ECO:0000269" key="2">
    <source>
    </source>
</evidence>
<evidence type="ECO:0000303" key="3">
    <source>
    </source>
</evidence>
<evidence type="ECO:0000305" key="4"/>
<evidence type="ECO:0007744" key="5">
    <source>
        <dbReference type="PDB" id="1L2L"/>
    </source>
</evidence>
<evidence type="ECO:0007744" key="6">
    <source>
        <dbReference type="PDB" id="5O0I"/>
    </source>
</evidence>
<evidence type="ECO:0007744" key="7">
    <source>
        <dbReference type="PDB" id="5O0J"/>
    </source>
</evidence>
<evidence type="ECO:0007829" key="8">
    <source>
        <dbReference type="PDB" id="1L2L"/>
    </source>
</evidence>
<evidence type="ECO:0007829" key="9">
    <source>
        <dbReference type="PDB" id="5O0J"/>
    </source>
</evidence>
<name>GLKA_PYRHO</name>
<accession>O58328</accession>
<feature type="chain" id="PRO_0000184773" description="ADP-dependent glucose/glucosamine kinase">
    <location>
        <begin position="1"/>
        <end position="457"/>
    </location>
</feature>
<feature type="domain" description="ADPK" evidence="1">
    <location>
        <begin position="5"/>
        <end position="457"/>
    </location>
</feature>
<feature type="active site" description="Proton acceptor" evidence="1">
    <location>
        <position position="443"/>
    </location>
</feature>
<feature type="binding site" evidence="1 2">
    <location>
        <position position="37"/>
    </location>
    <ligand>
        <name>D-glucose</name>
        <dbReference type="ChEBI" id="CHEBI:4167"/>
    </ligand>
</feature>
<feature type="binding site" evidence="1 2">
    <location>
        <position position="91"/>
    </location>
    <ligand>
        <name>D-glucose</name>
        <dbReference type="ChEBI" id="CHEBI:4167"/>
    </ligand>
</feature>
<feature type="binding site" evidence="1 2">
    <location>
        <begin position="115"/>
        <end position="116"/>
    </location>
    <ligand>
        <name>D-glucose</name>
        <dbReference type="ChEBI" id="CHEBI:4167"/>
    </ligand>
</feature>
<feature type="binding site" evidence="1 2">
    <location>
        <position position="179"/>
    </location>
    <ligand>
        <name>D-glucose</name>
        <dbReference type="ChEBI" id="CHEBI:4167"/>
    </ligand>
</feature>
<feature type="binding site" evidence="1">
    <location>
        <position position="269"/>
    </location>
    <ligand>
        <name>Mg(2+)</name>
        <dbReference type="ChEBI" id="CHEBI:18420"/>
    </ligand>
</feature>
<feature type="binding site" evidence="1">
    <location>
        <position position="295"/>
    </location>
    <ligand>
        <name>ADP</name>
        <dbReference type="ChEBI" id="CHEBI:456216"/>
    </ligand>
</feature>
<feature type="binding site" evidence="1">
    <location>
        <position position="298"/>
    </location>
    <ligand>
        <name>Mg(2+)</name>
        <dbReference type="ChEBI" id="CHEBI:18420"/>
    </ligand>
</feature>
<feature type="binding site" evidence="1">
    <location>
        <begin position="345"/>
        <end position="346"/>
    </location>
    <ligand>
        <name>ADP</name>
        <dbReference type="ChEBI" id="CHEBI:456216"/>
    </ligand>
</feature>
<feature type="binding site" evidence="1">
    <location>
        <position position="432"/>
    </location>
    <ligand>
        <name>ADP</name>
        <dbReference type="ChEBI" id="CHEBI:456216"/>
    </ligand>
</feature>
<feature type="binding site" evidence="1">
    <location>
        <position position="442"/>
    </location>
    <ligand>
        <name>ADP</name>
        <dbReference type="ChEBI" id="CHEBI:456216"/>
    </ligand>
</feature>
<feature type="binding site" evidence="1 2">
    <location>
        <position position="443"/>
    </location>
    <ligand>
        <name>D-glucose</name>
        <dbReference type="ChEBI" id="CHEBI:4167"/>
    </ligand>
</feature>
<feature type="binding site" evidence="1">
    <location>
        <position position="443"/>
    </location>
    <ligand>
        <name>Mg(2+)</name>
        <dbReference type="ChEBI" id="CHEBI:18420"/>
    </ligand>
</feature>
<feature type="mutagenesis site" description="Does not impact activity and inhibition by 8-Br-AMP." evidence="2">
    <original>F</original>
    <variation>A</variation>
    <location>
        <position position="272"/>
    </location>
</feature>
<feature type="helix" evidence="9">
    <location>
        <begin position="7"/>
        <end position="21"/>
    </location>
</feature>
<feature type="helix" evidence="9">
    <location>
        <begin position="22"/>
        <end position="24"/>
    </location>
</feature>
<feature type="strand" evidence="9">
    <location>
        <begin position="28"/>
        <end position="32"/>
    </location>
</feature>
<feature type="strand" evidence="9">
    <location>
        <begin position="35"/>
        <end position="41"/>
    </location>
</feature>
<feature type="helix" evidence="9">
    <location>
        <begin position="44"/>
        <end position="54"/>
    </location>
</feature>
<feature type="helix" evidence="9">
    <location>
        <begin position="56"/>
        <end position="64"/>
    </location>
</feature>
<feature type="strand" evidence="8">
    <location>
        <begin position="68"/>
        <end position="70"/>
    </location>
</feature>
<feature type="helix" evidence="9">
    <location>
        <begin position="73"/>
        <end position="86"/>
    </location>
</feature>
<feature type="strand" evidence="9">
    <location>
        <begin position="91"/>
        <end position="94"/>
    </location>
</feature>
<feature type="helix" evidence="9">
    <location>
        <begin position="97"/>
        <end position="106"/>
    </location>
</feature>
<feature type="strand" evidence="9">
    <location>
        <begin position="109"/>
        <end position="114"/>
    </location>
</feature>
<feature type="helix" evidence="9">
    <location>
        <begin position="115"/>
        <end position="124"/>
    </location>
</feature>
<feature type="turn" evidence="9">
    <location>
        <begin position="125"/>
        <end position="128"/>
    </location>
</feature>
<feature type="strand" evidence="9">
    <location>
        <begin position="132"/>
        <end position="134"/>
    </location>
</feature>
<feature type="helix" evidence="9">
    <location>
        <begin position="141"/>
        <end position="145"/>
    </location>
</feature>
<feature type="strand" evidence="9">
    <location>
        <begin position="149"/>
        <end position="158"/>
    </location>
</feature>
<feature type="strand" evidence="9">
    <location>
        <begin position="161"/>
        <end position="165"/>
    </location>
</feature>
<feature type="helix" evidence="8">
    <location>
        <begin position="167"/>
        <end position="169"/>
    </location>
</feature>
<feature type="strand" evidence="9">
    <location>
        <begin position="178"/>
        <end position="184"/>
    </location>
</feature>
<feature type="strand" evidence="9">
    <location>
        <begin position="199"/>
        <end position="204"/>
    </location>
</feature>
<feature type="helix" evidence="9">
    <location>
        <begin position="209"/>
        <end position="211"/>
    </location>
</feature>
<feature type="helix" evidence="9">
    <location>
        <begin position="216"/>
        <end position="226"/>
    </location>
</feature>
<feature type="strand" evidence="9">
    <location>
        <begin position="230"/>
        <end position="234"/>
    </location>
</feature>
<feature type="turn" evidence="9">
    <location>
        <begin position="242"/>
        <end position="244"/>
    </location>
</feature>
<feature type="helix" evidence="9">
    <location>
        <begin position="246"/>
        <end position="262"/>
    </location>
</feature>
<feature type="strand" evidence="9">
    <location>
        <begin position="265"/>
        <end position="269"/>
    </location>
</feature>
<feature type="helix" evidence="9">
    <location>
        <begin position="276"/>
        <end position="285"/>
    </location>
</feature>
<feature type="helix" evidence="9">
    <location>
        <begin position="286"/>
        <end position="288"/>
    </location>
</feature>
<feature type="strand" evidence="9">
    <location>
        <begin position="290"/>
        <end position="294"/>
    </location>
</feature>
<feature type="helix" evidence="9">
    <location>
        <begin position="296"/>
        <end position="305"/>
    </location>
</feature>
<feature type="helix" evidence="9">
    <location>
        <begin position="309"/>
        <end position="316"/>
    </location>
</feature>
<feature type="strand" evidence="9">
    <location>
        <begin position="317"/>
        <end position="320"/>
    </location>
</feature>
<feature type="helix" evidence="9">
    <location>
        <begin position="323"/>
        <end position="337"/>
    </location>
</feature>
<feature type="strand" evidence="9">
    <location>
        <begin position="340"/>
        <end position="346"/>
    </location>
</feature>
<feature type="strand" evidence="9">
    <location>
        <begin position="349"/>
        <end position="356"/>
    </location>
</feature>
<feature type="helix" evidence="9">
    <location>
        <begin position="359"/>
        <end position="378"/>
    </location>
</feature>
<feature type="helix" evidence="9">
    <location>
        <begin position="385"/>
        <end position="389"/>
    </location>
</feature>
<feature type="helix" evidence="9">
    <location>
        <begin position="390"/>
        <end position="392"/>
    </location>
</feature>
<feature type="helix" evidence="9">
    <location>
        <begin position="397"/>
        <end position="409"/>
    </location>
</feature>
<feature type="strand" evidence="9">
    <location>
        <begin position="416"/>
        <end position="419"/>
    </location>
</feature>
<feature type="strand" evidence="9">
    <location>
        <begin position="422"/>
        <end position="428"/>
    </location>
</feature>
<feature type="helix" evidence="9">
    <location>
        <begin position="441"/>
        <end position="456"/>
    </location>
</feature>